<protein>
    <recommendedName>
        <fullName evidence="1">Oxaloacetate decarboxylase 2</fullName>
        <ecNumber evidence="1">4.1.1.112</ecNumber>
    </recommendedName>
</protein>
<name>OADC2_PSEPF</name>
<proteinExistence type="inferred from homology"/>
<evidence type="ECO:0000255" key="1">
    <source>
        <dbReference type="HAMAP-Rule" id="MF_01299"/>
    </source>
</evidence>
<evidence type="ECO:0000305" key="2"/>
<accession>Q3KCJ2</accession>
<gene>
    <name type="ordered locus">Pfl01_2772</name>
</gene>
<reference key="1">
    <citation type="journal article" date="2009" name="Genome Biol.">
        <title>Genomic and genetic analyses of diversity and plant interactions of Pseudomonas fluorescens.</title>
        <authorList>
            <person name="Silby M.W."/>
            <person name="Cerdeno-Tarraga A.M."/>
            <person name="Vernikos G.S."/>
            <person name="Giddens S.R."/>
            <person name="Jackson R.W."/>
            <person name="Preston G.M."/>
            <person name="Zhang X.-X."/>
            <person name="Moon C.D."/>
            <person name="Gehrig S.M."/>
            <person name="Godfrey S.A.C."/>
            <person name="Knight C.G."/>
            <person name="Malone J.G."/>
            <person name="Robinson Z."/>
            <person name="Spiers A.J."/>
            <person name="Harris S."/>
            <person name="Challis G.L."/>
            <person name="Yaxley A.M."/>
            <person name="Harris D."/>
            <person name="Seeger K."/>
            <person name="Murphy L."/>
            <person name="Rutter S."/>
            <person name="Squares R."/>
            <person name="Quail M.A."/>
            <person name="Saunders E."/>
            <person name="Mavromatis K."/>
            <person name="Brettin T.S."/>
            <person name="Bentley S.D."/>
            <person name="Hothersall J."/>
            <person name="Stephens E."/>
            <person name="Thomas C.M."/>
            <person name="Parkhill J."/>
            <person name="Levy S.B."/>
            <person name="Rainey P.B."/>
            <person name="Thomson N.R."/>
        </authorList>
    </citation>
    <scope>NUCLEOTIDE SEQUENCE [LARGE SCALE GENOMIC DNA]</scope>
    <source>
        <strain>Pf0-1</strain>
    </source>
</reference>
<organism>
    <name type="scientific">Pseudomonas fluorescens (strain Pf0-1)</name>
    <dbReference type="NCBI Taxonomy" id="205922"/>
    <lineage>
        <taxon>Bacteria</taxon>
        <taxon>Pseudomonadati</taxon>
        <taxon>Pseudomonadota</taxon>
        <taxon>Gammaproteobacteria</taxon>
        <taxon>Pseudomonadales</taxon>
        <taxon>Pseudomonadaceae</taxon>
        <taxon>Pseudomonas</taxon>
    </lineage>
</organism>
<keyword id="KW-0210">Decarboxylase</keyword>
<keyword id="KW-0456">Lyase</keyword>
<keyword id="KW-0460">Magnesium</keyword>
<keyword id="KW-0479">Metal-binding</keyword>
<comment type="function">
    <text evidence="1">Catalyzes the decarboxylation of oxaloacetate into pyruvate. Seems to play a role in maintaining cellular concentrations of bicarbonate and pyruvate.</text>
</comment>
<comment type="catalytic activity">
    <reaction evidence="1">
        <text>oxaloacetate + H(+) = pyruvate + CO2</text>
        <dbReference type="Rhea" id="RHEA:15641"/>
        <dbReference type="ChEBI" id="CHEBI:15361"/>
        <dbReference type="ChEBI" id="CHEBI:15378"/>
        <dbReference type="ChEBI" id="CHEBI:16452"/>
        <dbReference type="ChEBI" id="CHEBI:16526"/>
        <dbReference type="EC" id="4.1.1.112"/>
    </reaction>
</comment>
<comment type="cofactor">
    <cofactor evidence="1">
        <name>Mg(2+)</name>
        <dbReference type="ChEBI" id="CHEBI:18420"/>
    </cofactor>
    <text evidence="1">Binds 1 Mg(2+) ion per subunit.</text>
</comment>
<comment type="subunit">
    <text evidence="1">Homotetramer; dimer of dimers.</text>
</comment>
<comment type="similarity">
    <text evidence="2">Belongs to the isocitrate lyase/PEP mutase superfamily. Oxaloacetate decarboxylase family.</text>
</comment>
<sequence>MIERSHHDLRKVFGELLQGDTCKFAASVFDPISVRMAYDLGFDVAIQGGSVASLQVLGAPDIALLTLDEYVEQVSRVGRASQIPIIGDADHGFGNALNVMRTVTELQKAGVAALTLEDTHLPAKYDEQSHVLIEREEAAAKIYAARFARSDDALSIIARTNVAVTTLDDSIARTAAYQKAGADAICLVGVKDFQHLEALTAHLRVPIMLINYGNPALSNVEKLSAANVRIVVNGHAPYLSAIKATYEALREQSGTEGSELSLPELLSKYTLSDSYREWAKTFLKSEHDSN</sequence>
<feature type="chain" id="PRO_0000364064" description="Oxaloacetate decarboxylase 2">
    <location>
        <begin position="1"/>
        <end position="290"/>
    </location>
</feature>
<feature type="binding site" evidence="1">
    <location>
        <position position="50"/>
    </location>
    <ligand>
        <name>substrate</name>
    </ligand>
</feature>
<feature type="binding site" evidence="1">
    <location>
        <position position="88"/>
    </location>
    <ligand>
        <name>Mg(2+)</name>
        <dbReference type="ChEBI" id="CHEBI:18420"/>
    </ligand>
</feature>
<feature type="binding site" evidence="1">
    <location>
        <position position="159"/>
    </location>
    <ligand>
        <name>substrate</name>
    </ligand>
</feature>
<feature type="binding site" evidence="1">
    <location>
        <position position="235"/>
    </location>
    <ligand>
        <name>substrate</name>
    </ligand>
</feature>
<dbReference type="EC" id="4.1.1.112" evidence="1"/>
<dbReference type="EMBL" id="CP000094">
    <property type="protein sequence ID" value="ABA74513.1"/>
    <property type="molecule type" value="Genomic_DNA"/>
</dbReference>
<dbReference type="RefSeq" id="WP_011334185.1">
    <property type="nucleotide sequence ID" value="NC_007492.2"/>
</dbReference>
<dbReference type="SMR" id="Q3KCJ2"/>
<dbReference type="KEGG" id="pfo:Pfl01_2772"/>
<dbReference type="eggNOG" id="COG2513">
    <property type="taxonomic scope" value="Bacteria"/>
</dbReference>
<dbReference type="HOGENOM" id="CLU_027389_3_2_6"/>
<dbReference type="Proteomes" id="UP000002704">
    <property type="component" value="Chromosome"/>
</dbReference>
<dbReference type="GO" id="GO:0000287">
    <property type="term" value="F:magnesium ion binding"/>
    <property type="evidence" value="ECO:0007669"/>
    <property type="project" value="UniProtKB-UniRule"/>
</dbReference>
<dbReference type="GO" id="GO:0046421">
    <property type="term" value="F:methylisocitrate lyase activity"/>
    <property type="evidence" value="ECO:0007669"/>
    <property type="project" value="TreeGrafter"/>
</dbReference>
<dbReference type="GO" id="GO:0008948">
    <property type="term" value="F:oxaloacetate decarboxylase activity"/>
    <property type="evidence" value="ECO:0007669"/>
    <property type="project" value="UniProtKB-UniRule"/>
</dbReference>
<dbReference type="GO" id="GO:0006107">
    <property type="term" value="P:oxaloacetate metabolic process"/>
    <property type="evidence" value="ECO:0007669"/>
    <property type="project" value="UniProtKB-UniRule"/>
</dbReference>
<dbReference type="GO" id="GO:0019629">
    <property type="term" value="P:propionate catabolic process, 2-methylcitrate cycle"/>
    <property type="evidence" value="ECO:0007669"/>
    <property type="project" value="TreeGrafter"/>
</dbReference>
<dbReference type="GO" id="GO:0042866">
    <property type="term" value="P:pyruvate biosynthetic process"/>
    <property type="evidence" value="ECO:0007669"/>
    <property type="project" value="UniProtKB-UniRule"/>
</dbReference>
<dbReference type="CDD" id="cd00377">
    <property type="entry name" value="ICL_PEPM"/>
    <property type="match status" value="1"/>
</dbReference>
<dbReference type="Gene3D" id="3.20.20.60">
    <property type="entry name" value="Phosphoenolpyruvate-binding domains"/>
    <property type="match status" value="1"/>
</dbReference>
<dbReference type="HAMAP" id="MF_01299">
    <property type="entry name" value="OadC"/>
    <property type="match status" value="1"/>
</dbReference>
<dbReference type="InterPro" id="IPR039556">
    <property type="entry name" value="ICL/PEPM"/>
</dbReference>
<dbReference type="InterPro" id="IPR023687">
    <property type="entry name" value="Oxaloacetate_deCOase_bac"/>
</dbReference>
<dbReference type="InterPro" id="IPR015813">
    <property type="entry name" value="Pyrv/PenolPyrv_kinase-like_dom"/>
</dbReference>
<dbReference type="InterPro" id="IPR040442">
    <property type="entry name" value="Pyrv_kinase-like_dom_sf"/>
</dbReference>
<dbReference type="PANTHER" id="PTHR42905:SF3">
    <property type="entry name" value="OXALOACETATE DECARBOXYLASE"/>
    <property type="match status" value="1"/>
</dbReference>
<dbReference type="PANTHER" id="PTHR42905">
    <property type="entry name" value="PHOSPHOENOLPYRUVATE CARBOXYLASE"/>
    <property type="match status" value="1"/>
</dbReference>
<dbReference type="Pfam" id="PF13714">
    <property type="entry name" value="PEP_mutase"/>
    <property type="match status" value="1"/>
</dbReference>
<dbReference type="SUPFAM" id="SSF51621">
    <property type="entry name" value="Phosphoenolpyruvate/pyruvate domain"/>
    <property type="match status" value="1"/>
</dbReference>